<accession>Q06108</accession>
<accession>D6W4B4</accession>
<reference key="1">
    <citation type="journal article" date="1997" name="Nature">
        <title>The nucleotide sequence of Saccharomyces cerevisiae chromosome XVI.</title>
        <authorList>
            <person name="Bussey H."/>
            <person name="Storms R.K."/>
            <person name="Ahmed A."/>
            <person name="Albermann K."/>
            <person name="Allen E."/>
            <person name="Ansorge W."/>
            <person name="Araujo R."/>
            <person name="Aparicio A."/>
            <person name="Barrell B.G."/>
            <person name="Badcock K."/>
            <person name="Benes V."/>
            <person name="Botstein D."/>
            <person name="Bowman S."/>
            <person name="Brueckner M."/>
            <person name="Carpenter J."/>
            <person name="Cherry J.M."/>
            <person name="Chung E."/>
            <person name="Churcher C.M."/>
            <person name="Coster F."/>
            <person name="Davis K."/>
            <person name="Davis R.W."/>
            <person name="Dietrich F.S."/>
            <person name="Delius H."/>
            <person name="DiPaolo T."/>
            <person name="Dubois E."/>
            <person name="Duesterhoeft A."/>
            <person name="Duncan M."/>
            <person name="Floeth M."/>
            <person name="Fortin N."/>
            <person name="Friesen J.D."/>
            <person name="Fritz C."/>
            <person name="Goffeau A."/>
            <person name="Hall J."/>
            <person name="Hebling U."/>
            <person name="Heumann K."/>
            <person name="Hilbert H."/>
            <person name="Hillier L.W."/>
            <person name="Hunicke-Smith S."/>
            <person name="Hyman R.W."/>
            <person name="Johnston M."/>
            <person name="Kalman S."/>
            <person name="Kleine K."/>
            <person name="Komp C."/>
            <person name="Kurdi O."/>
            <person name="Lashkari D."/>
            <person name="Lew H."/>
            <person name="Lin A."/>
            <person name="Lin D."/>
            <person name="Louis E.J."/>
            <person name="Marathe R."/>
            <person name="Messenguy F."/>
            <person name="Mewes H.-W."/>
            <person name="Mirtipati S."/>
            <person name="Moestl D."/>
            <person name="Mueller-Auer S."/>
            <person name="Namath A."/>
            <person name="Nentwich U."/>
            <person name="Oefner P."/>
            <person name="Pearson D."/>
            <person name="Petel F.X."/>
            <person name="Pohl T.M."/>
            <person name="Purnelle B."/>
            <person name="Rajandream M.A."/>
            <person name="Rechmann S."/>
            <person name="Rieger M."/>
            <person name="Riles L."/>
            <person name="Roberts D."/>
            <person name="Schaefer M."/>
            <person name="Scharfe M."/>
            <person name="Scherens B."/>
            <person name="Schramm S."/>
            <person name="Schroeder M."/>
            <person name="Sdicu A.-M."/>
            <person name="Tettelin H."/>
            <person name="Urrestarazu L.A."/>
            <person name="Ushinsky S."/>
            <person name="Vierendeels F."/>
            <person name="Vissers S."/>
            <person name="Voss H."/>
            <person name="Walsh S.V."/>
            <person name="Wambutt R."/>
            <person name="Wang Y."/>
            <person name="Wedler E."/>
            <person name="Wedler H."/>
            <person name="Winnett E."/>
            <person name="Zhong W.-W."/>
            <person name="Zollner A."/>
            <person name="Vo D.H."/>
            <person name="Hani J."/>
        </authorList>
    </citation>
    <scope>NUCLEOTIDE SEQUENCE [LARGE SCALE GENOMIC DNA]</scope>
    <source>
        <strain>ATCC 204508 / S288c</strain>
    </source>
</reference>
<reference key="2">
    <citation type="journal article" date="2014" name="G3 (Bethesda)">
        <title>The reference genome sequence of Saccharomyces cerevisiae: Then and now.</title>
        <authorList>
            <person name="Engel S.R."/>
            <person name="Dietrich F.S."/>
            <person name="Fisk D.G."/>
            <person name="Binkley G."/>
            <person name="Balakrishnan R."/>
            <person name="Costanzo M.C."/>
            <person name="Dwight S.S."/>
            <person name="Hitz B.C."/>
            <person name="Karra K."/>
            <person name="Nash R.S."/>
            <person name="Weng S."/>
            <person name="Wong E.D."/>
            <person name="Lloyd P."/>
            <person name="Skrzypek M.S."/>
            <person name="Miyasato S.R."/>
            <person name="Simison M."/>
            <person name="Cherry J.M."/>
        </authorList>
    </citation>
    <scope>GENOME REANNOTATION</scope>
    <source>
        <strain>ATCC 204508 / S288c</strain>
    </source>
</reference>
<reference key="3">
    <citation type="journal article" date="2003" name="FEMS Microbiol. Lett.">
        <title>The budding index of Saccharomyces cerevisiae deletion strains identifies genes important for cell cycle progression.</title>
        <authorList>
            <person name="Zettel M.F."/>
            <person name="Garza L.R."/>
            <person name="Cass A.M."/>
            <person name="Myhre R.A."/>
            <person name="Haizlip L.A."/>
            <person name="Osadebe S.N."/>
            <person name="Sudimack D.W."/>
            <person name="Pathak R."/>
            <person name="Stone T.L."/>
            <person name="Polymenis M."/>
        </authorList>
    </citation>
    <scope>FUNCTION</scope>
</reference>
<reference key="4">
    <citation type="journal article" date="2003" name="Nature">
        <title>Global analysis of protein localization in budding yeast.</title>
        <authorList>
            <person name="Huh W.-K."/>
            <person name="Falvo J.V."/>
            <person name="Gerke L.C."/>
            <person name="Carroll A.S."/>
            <person name="Howson R.W."/>
            <person name="Weissman J.S."/>
            <person name="O'Shea E.K."/>
        </authorList>
    </citation>
    <scope>SUBCELLULAR LOCATION [LARGE SCALE ANALYSIS]</scope>
</reference>
<reference key="5">
    <citation type="journal article" date="2003" name="Nature">
        <title>Global analysis of protein expression in yeast.</title>
        <authorList>
            <person name="Ghaemmaghami S."/>
            <person name="Huh W.-K."/>
            <person name="Bower K."/>
            <person name="Howson R.W."/>
            <person name="Belle A."/>
            <person name="Dephoure N."/>
            <person name="O'Shea E.K."/>
            <person name="Weissman J.S."/>
        </authorList>
    </citation>
    <scope>LEVEL OF PROTEIN EXPRESSION [LARGE SCALE ANALYSIS]</scope>
</reference>
<reference key="6">
    <citation type="journal article" date="2004" name="Mol. Cell">
        <title>Genome-wide analysis of membrane targeting by S.cerevisiae pleckstrin homology domains.</title>
        <authorList>
            <person name="Yu J.W."/>
            <person name="Mendrola J.M."/>
            <person name="Audhya A."/>
            <person name="Singh S."/>
            <person name="Keleti D."/>
            <person name="DeWald D.B."/>
            <person name="Murray D."/>
            <person name="Emr S.D."/>
            <person name="Lemmon M.A."/>
        </authorList>
    </citation>
    <scope>SUBCELLULAR LOCATION</scope>
</reference>
<reference key="7">
    <citation type="journal article" date="2007" name="J. Proteome Res.">
        <title>Large-scale phosphorylation analysis of alpha-factor-arrested Saccharomyces cerevisiae.</title>
        <authorList>
            <person name="Li X."/>
            <person name="Gerber S.A."/>
            <person name="Rudner A.D."/>
            <person name="Beausoleil S.A."/>
            <person name="Haas W."/>
            <person name="Villen J."/>
            <person name="Elias J.E."/>
            <person name="Gygi S.P."/>
        </authorList>
    </citation>
    <scope>PHOSPHORYLATION [LARGE SCALE ANALYSIS] AT SER-481</scope>
    <scope>IDENTIFICATION BY MASS SPECTROMETRY [LARGE SCALE ANALYSIS]</scope>
    <source>
        <strain>ADR376</strain>
    </source>
</reference>
<reference key="8">
    <citation type="journal article" date="2008" name="Mol. Cell. Proteomics">
        <title>A multidimensional chromatography technology for in-depth phosphoproteome analysis.</title>
        <authorList>
            <person name="Albuquerque C.P."/>
            <person name="Smolka M.B."/>
            <person name="Payne S.H."/>
            <person name="Bafna V."/>
            <person name="Eng J."/>
            <person name="Zhou H."/>
        </authorList>
    </citation>
    <scope>PHOSPHORYLATION [LARGE SCALE ANALYSIS] AT SER-481; SER-652; THR-817; SER-866; SER-918 AND SER-1059</scope>
    <scope>IDENTIFICATION BY MASS SPECTROMETRY [LARGE SCALE ANALYSIS]</scope>
</reference>
<reference key="9">
    <citation type="journal article" date="2009" name="PLoS Genet.">
        <title>Identification of positive regulators of the yeast fps1 glycerol channel.</title>
        <authorList>
            <person name="Beese S.E."/>
            <person name="Negishi T."/>
            <person name="Levin D.E."/>
        </authorList>
    </citation>
    <scope>FUNCTION</scope>
</reference>
<reference key="10">
    <citation type="journal article" date="2009" name="Science">
        <title>Global analysis of Cdk1 substrate phosphorylation sites provides insights into evolution.</title>
        <authorList>
            <person name="Holt L.J."/>
            <person name="Tuch B.B."/>
            <person name="Villen J."/>
            <person name="Johnson A.D."/>
            <person name="Gygi S.P."/>
            <person name="Morgan D.O."/>
        </authorList>
    </citation>
    <scope>PHOSPHORYLATION [LARGE SCALE ANALYSIS] AT SER-136; SER-249; SER-252; SER-481; SER-537; SER-652; SER-765; SER-813; THR-817; THR-857; SER-866; SER-879; SER-966; SER-969; SER-975; SER-1059; SER-1081 AND SER-1082</scope>
    <scope>IDENTIFICATION BY MASS SPECTROMETRY [LARGE SCALE ANALYSIS]</scope>
</reference>
<protein>
    <recommendedName>
        <fullName>Regulator of the glycerol channel 1</fullName>
    </recommendedName>
</protein>
<feature type="chain" id="PRO_0000242488" description="Regulator of the glycerol channel 1">
    <location>
        <begin position="1"/>
        <end position="1083"/>
    </location>
</feature>
<feature type="domain" description="PH">
    <location>
        <begin position="495"/>
        <end position="606"/>
    </location>
</feature>
<feature type="region of interest" description="Disordered" evidence="1">
    <location>
        <begin position="1"/>
        <end position="46"/>
    </location>
</feature>
<feature type="region of interest" description="Disordered" evidence="1">
    <location>
        <begin position="69"/>
        <end position="89"/>
    </location>
</feature>
<feature type="region of interest" description="Disordered" evidence="1">
    <location>
        <begin position="534"/>
        <end position="582"/>
    </location>
</feature>
<feature type="region of interest" description="Disordered" evidence="1">
    <location>
        <begin position="979"/>
        <end position="1083"/>
    </location>
</feature>
<feature type="compositionally biased region" description="Polar residues" evidence="1">
    <location>
        <begin position="13"/>
        <end position="31"/>
    </location>
</feature>
<feature type="compositionally biased region" description="Polar residues" evidence="1">
    <location>
        <begin position="549"/>
        <end position="570"/>
    </location>
</feature>
<feature type="compositionally biased region" description="Polar residues" evidence="1">
    <location>
        <begin position="983"/>
        <end position="992"/>
    </location>
</feature>
<feature type="compositionally biased region" description="Polar residues" evidence="1">
    <location>
        <begin position="1043"/>
        <end position="1061"/>
    </location>
</feature>
<feature type="compositionally biased region" description="Polar residues" evidence="1">
    <location>
        <begin position="1071"/>
        <end position="1083"/>
    </location>
</feature>
<feature type="modified residue" description="Phosphoserine" evidence="10">
    <location>
        <position position="136"/>
    </location>
</feature>
<feature type="modified residue" description="Phosphoserine" evidence="10">
    <location>
        <position position="249"/>
    </location>
</feature>
<feature type="modified residue" description="Phosphoserine" evidence="10">
    <location>
        <position position="252"/>
    </location>
</feature>
<feature type="modified residue" description="Phosphoserine" evidence="8 9 10">
    <location>
        <position position="481"/>
    </location>
</feature>
<feature type="modified residue" description="Phosphoserine" evidence="10">
    <location>
        <position position="537"/>
    </location>
</feature>
<feature type="modified residue" description="Phosphoserine" evidence="9 10">
    <location>
        <position position="652"/>
    </location>
</feature>
<feature type="modified residue" description="Phosphoserine" evidence="10">
    <location>
        <position position="765"/>
    </location>
</feature>
<feature type="modified residue" description="Phosphoserine" evidence="10">
    <location>
        <position position="813"/>
    </location>
</feature>
<feature type="modified residue" description="Phosphothreonine" evidence="9 10">
    <location>
        <position position="817"/>
    </location>
</feature>
<feature type="modified residue" description="Phosphothreonine" evidence="10">
    <location>
        <position position="857"/>
    </location>
</feature>
<feature type="modified residue" description="Phosphoserine" evidence="9 10">
    <location>
        <position position="866"/>
    </location>
</feature>
<feature type="modified residue" description="Phosphoserine" evidence="10">
    <location>
        <position position="879"/>
    </location>
</feature>
<feature type="modified residue" description="Phosphoserine" evidence="9">
    <location>
        <position position="918"/>
    </location>
</feature>
<feature type="modified residue" description="Phosphoserine" evidence="10">
    <location>
        <position position="966"/>
    </location>
</feature>
<feature type="modified residue" description="Phosphoserine" evidence="10">
    <location>
        <position position="969"/>
    </location>
</feature>
<feature type="modified residue" description="Phosphoserine" evidence="10">
    <location>
        <position position="975"/>
    </location>
</feature>
<feature type="modified residue" description="Phosphoserine" evidence="9 10">
    <location>
        <position position="1059"/>
    </location>
</feature>
<feature type="modified residue" description="Phosphoserine" evidence="10">
    <location>
        <position position="1081"/>
    </location>
</feature>
<feature type="modified residue" description="Phosphoserine" evidence="10">
    <location>
        <position position="1082"/>
    </location>
</feature>
<name>RGC1_YEAST</name>
<evidence type="ECO:0000256" key="1">
    <source>
        <dbReference type="SAM" id="MobiDB-lite"/>
    </source>
</evidence>
<evidence type="ECO:0000269" key="2">
    <source>
    </source>
</evidence>
<evidence type="ECO:0000269" key="3">
    <source>
    </source>
</evidence>
<evidence type="ECO:0000269" key="4">
    <source>
    </source>
</evidence>
<evidence type="ECO:0000269" key="5">
    <source>
    </source>
</evidence>
<evidence type="ECO:0000269" key="6">
    <source>
    </source>
</evidence>
<evidence type="ECO:0000305" key="7"/>
<evidence type="ECO:0007744" key="8">
    <source>
    </source>
</evidence>
<evidence type="ECO:0007744" key="9">
    <source>
    </source>
</evidence>
<evidence type="ECO:0007744" key="10">
    <source>
    </source>
</evidence>
<gene>
    <name type="primary">RGC1</name>
    <name type="ordered locus">YPR115W</name>
</gene>
<keyword id="KW-0131">Cell cycle</keyword>
<keyword id="KW-0963">Cytoplasm</keyword>
<keyword id="KW-0597">Phosphoprotein</keyword>
<keyword id="KW-1185">Reference proteome</keyword>
<organism>
    <name type="scientific">Saccharomyces cerevisiae (strain ATCC 204508 / S288c)</name>
    <name type="common">Baker's yeast</name>
    <dbReference type="NCBI Taxonomy" id="559292"/>
    <lineage>
        <taxon>Eukaryota</taxon>
        <taxon>Fungi</taxon>
        <taxon>Dikarya</taxon>
        <taxon>Ascomycota</taxon>
        <taxon>Saccharomycotina</taxon>
        <taxon>Saccharomycetes</taxon>
        <taxon>Saccharomycetales</taxon>
        <taxon>Saccharomycetaceae</taxon>
        <taxon>Saccharomyces</taxon>
    </lineage>
</organism>
<sequence length="1083" mass="120395">MSDYFTFPKQENGGISKQPATPGSTRSSSRNLELPKNYRSFGGSSDELASMYSADSQYLMDMIPDSLTLKNEPASGNTQMNGPDGKENKDIKLDEYILPKTDPRSPYYINMPIPKKLPKSEGKARAKQKVNRADPSDLDVENIYETSGEFVREYPTDILIDRFHKWKKILKSLIAYFREAAYSQEQIARINYQMKNAVKFAFLTDLEDETNKLVDPSISKLPTKKPQPVPLAAQKLDSKYDTDVEQPQSIQSVPSEEVASASSGFMKFGSGSIQDIQVILKKYHLSLGSQQYKISKEILAYIIPKLTDLRKDLTTKMKEIKELNGDFKTNIGEHIKITSRLLNKYIASVKLLDEASTSGDKQGEKLKPKHDPYLLKLQLDLQLKRQLLEENYLREAFLNLQSAALQLEKIVYSKIQSALQRYSALIDSEARLMIKNLCHELQQGILSRPPAVEWDNFVSHHPTCLMNLKSTDPPPQPRRLSDIVYPNMKSPLAKCIRVGYLLKKTESSKSFTKGYFVLTTNYLHEFKSSDFFLDSKSPRSKNKPVVEQSDISRVNKDGTNAGSHPSSKGTQDPKLTKRRKGLSSSNLYPISSLSLNDCSLKDSTDSTFVLQGYASYHSPEDTCTKESSTTSDLACPTKTLASNKGKHQRTPSALSMVSVPKFLKSSSVPKEQKKAKEEANINKKSICEKRVEWTFKIFSASLEPTPEESKNFKKWVQDIKALTSFNSTQERSNFIEEKILKSRNHNNGKSSQRSKNSTYITPVDSFVNLSEKVTPSSSVTTLNTRKRANRPRYIDIPKSANMNAGAMNSVYRSKVNTPAIDENGNLAIVGETKNSAPQNGMSYTIRTPCKSPYSPYTGEGMLYNRSADNLMASSSRKASAPGEVPQIAVSNHGDEAIIPASAYSDSSHKSSRASSVASIHNQRVDFYPSPLMNLPGVSPSCLALDGNANGYFGIPLNCNSEARRGSDLSPFEMESPLFEENRTQNCSGSRKSSACHIPHQCGPRKEGNDSRLIYGNEKGASQSRLTLKEPLTSKGVEAPYSSLKKTYSAENVPLTSTVSNDKSLHSRKEGSTNTVPATSASSK</sequence>
<comment type="function">
    <text evidence="2 6">Positive regulator of FPS1 glycerol channel required for the glycerol efflux.</text>
</comment>
<comment type="subcellular location">
    <subcellularLocation>
        <location evidence="3 5">Cytoplasm</location>
    </subcellularLocation>
</comment>
<comment type="miscellaneous">
    <text evidence="4">Present with 300 molecules/cell in log phase SD medium.</text>
</comment>
<comment type="miscellaneous">
    <text>Does not bind efficiently to phosphoinositides and does not associate with membranes.</text>
</comment>
<comment type="similarity">
    <text evidence="7">Belongs to the RGC1 family.</text>
</comment>
<dbReference type="EMBL" id="U32445">
    <property type="protein sequence ID" value="AAB68085.1"/>
    <property type="molecule type" value="Genomic_DNA"/>
</dbReference>
<dbReference type="EMBL" id="BK006949">
    <property type="protein sequence ID" value="DAA11530.1"/>
    <property type="molecule type" value="Genomic_DNA"/>
</dbReference>
<dbReference type="PIR" id="S59780">
    <property type="entry name" value="S59780"/>
</dbReference>
<dbReference type="RefSeq" id="NP_015440.1">
    <property type="nucleotide sequence ID" value="NM_001184212.1"/>
</dbReference>
<dbReference type="BioGRID" id="36282">
    <property type="interactions" value="123"/>
</dbReference>
<dbReference type="DIP" id="DIP-1970N"/>
<dbReference type="FunCoup" id="Q06108">
    <property type="interactions" value="306"/>
</dbReference>
<dbReference type="IntAct" id="Q06108">
    <property type="interactions" value="50"/>
</dbReference>
<dbReference type="MINT" id="Q06108"/>
<dbReference type="STRING" id="4932.YPR115W"/>
<dbReference type="GlyGen" id="Q06108">
    <property type="glycosylation" value="4 sites, 1 O-linked glycan (3 sites)"/>
</dbReference>
<dbReference type="iPTMnet" id="Q06108"/>
<dbReference type="PaxDb" id="4932-YPR115W"/>
<dbReference type="PeptideAtlas" id="Q06108"/>
<dbReference type="EnsemblFungi" id="YPR115W_mRNA">
    <property type="protein sequence ID" value="YPR115W"/>
    <property type="gene ID" value="YPR115W"/>
</dbReference>
<dbReference type="GeneID" id="856231"/>
<dbReference type="KEGG" id="sce:YPR115W"/>
<dbReference type="AGR" id="SGD:S000006319"/>
<dbReference type="SGD" id="S000006319">
    <property type="gene designation" value="RGC1"/>
</dbReference>
<dbReference type="VEuPathDB" id="FungiDB:YPR115W"/>
<dbReference type="eggNOG" id="ENOG502QU0Q">
    <property type="taxonomic scope" value="Eukaryota"/>
</dbReference>
<dbReference type="GeneTree" id="ENSGT00940000176324"/>
<dbReference type="HOGENOM" id="CLU_008754_0_0_1"/>
<dbReference type="InParanoid" id="Q06108"/>
<dbReference type="OrthoDB" id="2264563at2759"/>
<dbReference type="BioCyc" id="YEAST:G3O-34254-MONOMER"/>
<dbReference type="BioGRID-ORCS" id="856231">
    <property type="hits" value="2 hits in 10 CRISPR screens"/>
</dbReference>
<dbReference type="PRO" id="PR:Q06108"/>
<dbReference type="Proteomes" id="UP000002311">
    <property type="component" value="Chromosome XVI"/>
</dbReference>
<dbReference type="RNAct" id="Q06108">
    <property type="molecule type" value="protein"/>
</dbReference>
<dbReference type="GO" id="GO:0005737">
    <property type="term" value="C:cytoplasm"/>
    <property type="evidence" value="ECO:0007005"/>
    <property type="project" value="SGD"/>
</dbReference>
<dbReference type="GO" id="GO:0005886">
    <property type="term" value="C:plasma membrane"/>
    <property type="evidence" value="ECO:0000318"/>
    <property type="project" value="GO_Central"/>
</dbReference>
<dbReference type="GO" id="GO:0016247">
    <property type="term" value="F:channel regulator activity"/>
    <property type="evidence" value="ECO:0000250"/>
    <property type="project" value="SGD"/>
</dbReference>
<dbReference type="GO" id="GO:0030036">
    <property type="term" value="P:actin cytoskeleton organization"/>
    <property type="evidence" value="ECO:0000318"/>
    <property type="project" value="GO_Central"/>
</dbReference>
<dbReference type="GO" id="GO:0090372">
    <property type="term" value="P:positive regulation of glycerol transport"/>
    <property type="evidence" value="ECO:0000315"/>
    <property type="project" value="SGD"/>
</dbReference>
<dbReference type="Gene3D" id="1.20.1270.60">
    <property type="entry name" value="Arfaptin homology (AH) domain/BAR domain"/>
    <property type="match status" value="1"/>
</dbReference>
<dbReference type="Gene3D" id="2.30.29.30">
    <property type="entry name" value="Pleckstrin-homology domain (PH domain)/Phosphotyrosine-binding domain (PTB)"/>
    <property type="match status" value="1"/>
</dbReference>
<dbReference type="InterPro" id="IPR027267">
    <property type="entry name" value="AH/BAR_dom_sf"/>
</dbReference>
<dbReference type="InterPro" id="IPR046868">
    <property type="entry name" value="BAR_4"/>
</dbReference>
<dbReference type="InterPro" id="IPR011993">
    <property type="entry name" value="PH-like_dom_sf"/>
</dbReference>
<dbReference type="InterPro" id="IPR001849">
    <property type="entry name" value="PH_domain"/>
</dbReference>
<dbReference type="InterPro" id="IPR046869">
    <property type="entry name" value="SLM1/RGC1-like_PH"/>
</dbReference>
<dbReference type="PANTHER" id="PTHR31941:SF15">
    <property type="entry name" value="ACTIVATOR OF SKN7 PROTEIN 10-RELATED"/>
    <property type="match status" value="1"/>
</dbReference>
<dbReference type="PANTHER" id="PTHR31941">
    <property type="entry name" value="CYTOSKELETAL SIGNALING PROTEIN SLM1"/>
    <property type="match status" value="1"/>
</dbReference>
<dbReference type="Pfam" id="PF20400">
    <property type="entry name" value="BAR_4"/>
    <property type="match status" value="1"/>
</dbReference>
<dbReference type="Pfam" id="PF20399">
    <property type="entry name" value="PH_20"/>
    <property type="match status" value="1"/>
</dbReference>
<dbReference type="SMART" id="SM00233">
    <property type="entry name" value="PH"/>
    <property type="match status" value="1"/>
</dbReference>
<dbReference type="SUPFAM" id="SSF103657">
    <property type="entry name" value="BAR/IMD domain-like"/>
    <property type="match status" value="1"/>
</dbReference>
<dbReference type="SUPFAM" id="SSF50729">
    <property type="entry name" value="PH domain-like"/>
    <property type="match status" value="1"/>
</dbReference>
<proteinExistence type="evidence at protein level"/>